<keyword id="KW-0687">Ribonucleoprotein</keyword>
<keyword id="KW-0689">Ribosomal protein</keyword>
<sequence length="85" mass="10021">MVRIRLALYGTKKRPFYKMVVADSRFSRDGRFIEKLGHFNPVSKCQNSTLKLNLNRIEYWQGKGAQISKRSQKLIKLFNKKEDTV</sequence>
<organism>
    <name type="scientific">Buchnera aphidicola subsp. Schizaphis graminum (strain Sg)</name>
    <dbReference type="NCBI Taxonomy" id="198804"/>
    <lineage>
        <taxon>Bacteria</taxon>
        <taxon>Pseudomonadati</taxon>
        <taxon>Pseudomonadota</taxon>
        <taxon>Gammaproteobacteria</taxon>
        <taxon>Enterobacterales</taxon>
        <taxon>Erwiniaceae</taxon>
        <taxon>Buchnera</taxon>
    </lineage>
</organism>
<feature type="chain" id="PRO_0000167164" description="Small ribosomal subunit protein bS16">
    <location>
        <begin position="1"/>
        <end position="85"/>
    </location>
</feature>
<proteinExistence type="inferred from homology"/>
<reference key="1">
    <citation type="journal article" date="2002" name="Science">
        <title>50 million years of genomic stasis in endosymbiotic bacteria.</title>
        <authorList>
            <person name="Tamas I."/>
            <person name="Klasson L."/>
            <person name="Canbaeck B."/>
            <person name="Naeslund A.K."/>
            <person name="Eriksson A.-S."/>
            <person name="Wernegreen J.J."/>
            <person name="Sandstroem J.P."/>
            <person name="Moran N.A."/>
            <person name="Andersson S.G.E."/>
        </authorList>
    </citation>
    <scope>NUCLEOTIDE SEQUENCE [LARGE SCALE GENOMIC DNA]</scope>
    <source>
        <strain>Sg</strain>
    </source>
</reference>
<dbReference type="EMBL" id="AE013218">
    <property type="protein sequence ID" value="AAM67933.1"/>
    <property type="molecule type" value="Genomic_DNA"/>
</dbReference>
<dbReference type="RefSeq" id="WP_011053900.1">
    <property type="nucleotide sequence ID" value="NC_004061.1"/>
</dbReference>
<dbReference type="SMR" id="Q8K9F6"/>
<dbReference type="STRING" id="198804.BUsg_381"/>
<dbReference type="GeneID" id="93003851"/>
<dbReference type="KEGG" id="bas:BUsg_381"/>
<dbReference type="eggNOG" id="COG0228">
    <property type="taxonomic scope" value="Bacteria"/>
</dbReference>
<dbReference type="HOGENOM" id="CLU_100590_5_1_6"/>
<dbReference type="Proteomes" id="UP000000416">
    <property type="component" value="Chromosome"/>
</dbReference>
<dbReference type="GO" id="GO:0005737">
    <property type="term" value="C:cytoplasm"/>
    <property type="evidence" value="ECO:0007669"/>
    <property type="project" value="UniProtKB-ARBA"/>
</dbReference>
<dbReference type="GO" id="GO:0015935">
    <property type="term" value="C:small ribosomal subunit"/>
    <property type="evidence" value="ECO:0007669"/>
    <property type="project" value="TreeGrafter"/>
</dbReference>
<dbReference type="GO" id="GO:0003735">
    <property type="term" value="F:structural constituent of ribosome"/>
    <property type="evidence" value="ECO:0007669"/>
    <property type="project" value="InterPro"/>
</dbReference>
<dbReference type="GO" id="GO:0006412">
    <property type="term" value="P:translation"/>
    <property type="evidence" value="ECO:0007669"/>
    <property type="project" value="UniProtKB-UniRule"/>
</dbReference>
<dbReference type="Gene3D" id="3.30.1320.10">
    <property type="match status" value="1"/>
</dbReference>
<dbReference type="HAMAP" id="MF_00385">
    <property type="entry name" value="Ribosomal_bS16"/>
    <property type="match status" value="1"/>
</dbReference>
<dbReference type="InterPro" id="IPR000307">
    <property type="entry name" value="Ribosomal_bS16"/>
</dbReference>
<dbReference type="InterPro" id="IPR023803">
    <property type="entry name" value="Ribosomal_bS16_dom_sf"/>
</dbReference>
<dbReference type="NCBIfam" id="TIGR00002">
    <property type="entry name" value="S16"/>
    <property type="match status" value="1"/>
</dbReference>
<dbReference type="PANTHER" id="PTHR12919">
    <property type="entry name" value="30S RIBOSOMAL PROTEIN S16"/>
    <property type="match status" value="1"/>
</dbReference>
<dbReference type="PANTHER" id="PTHR12919:SF20">
    <property type="entry name" value="SMALL RIBOSOMAL SUBUNIT PROTEIN BS16M"/>
    <property type="match status" value="1"/>
</dbReference>
<dbReference type="Pfam" id="PF00886">
    <property type="entry name" value="Ribosomal_S16"/>
    <property type="match status" value="1"/>
</dbReference>
<dbReference type="SUPFAM" id="SSF54565">
    <property type="entry name" value="Ribosomal protein S16"/>
    <property type="match status" value="1"/>
</dbReference>
<name>RS16_BUCAP</name>
<protein>
    <recommendedName>
        <fullName evidence="1">Small ribosomal subunit protein bS16</fullName>
    </recommendedName>
    <alternativeName>
        <fullName evidence="2">30S ribosomal protein S16</fullName>
    </alternativeName>
</protein>
<evidence type="ECO:0000255" key="1">
    <source>
        <dbReference type="HAMAP-Rule" id="MF_00385"/>
    </source>
</evidence>
<evidence type="ECO:0000305" key="2"/>
<gene>
    <name evidence="1" type="primary">rpsP</name>
    <name type="ordered locus">BUsg_381</name>
</gene>
<comment type="similarity">
    <text evidence="1">Belongs to the bacterial ribosomal protein bS16 family.</text>
</comment>
<accession>Q8K9F6</accession>